<sequence>MLSNLPVIFLMGPTAAGKTALAISLCEHLNTEIISVDSALVYKGMDIGTAKPDASELARAPHHLIDLLDPSETYSVADFRRDAIIKIDEFHQQGKVPVLVGGTMLYFKALIDGLSPLPEANVEIRAELEAQAAQYGWPHLYQELVKIDPQAAQKMSENDSQRINRALEVYKLTGKTMTELQKQKQPVLPYTFHQFAIAPTQRSELHQRIEKRFKIMLEQGFENEVSTLYLRKDLHPNMPSIRCVGYRQMWDYLAGEIDHDEMVFRGIAATRQLAKRQLTWLRSWPDVTWLTTGDEENLHRVVSSLS</sequence>
<name>MIAA_PSET1</name>
<comment type="function">
    <text evidence="1">Catalyzes the transfer of a dimethylallyl group onto the adenine at position 37 in tRNAs that read codons beginning with uridine, leading to the formation of N6-(dimethylallyl)adenosine (i(6)A).</text>
</comment>
<comment type="catalytic activity">
    <reaction evidence="1">
        <text>adenosine(37) in tRNA + dimethylallyl diphosphate = N(6)-dimethylallyladenosine(37) in tRNA + diphosphate</text>
        <dbReference type="Rhea" id="RHEA:26482"/>
        <dbReference type="Rhea" id="RHEA-COMP:10162"/>
        <dbReference type="Rhea" id="RHEA-COMP:10375"/>
        <dbReference type="ChEBI" id="CHEBI:33019"/>
        <dbReference type="ChEBI" id="CHEBI:57623"/>
        <dbReference type="ChEBI" id="CHEBI:74411"/>
        <dbReference type="ChEBI" id="CHEBI:74415"/>
        <dbReference type="EC" id="2.5.1.75"/>
    </reaction>
</comment>
<comment type="cofactor">
    <cofactor evidence="1">
        <name>Mg(2+)</name>
        <dbReference type="ChEBI" id="CHEBI:18420"/>
    </cofactor>
</comment>
<comment type="subunit">
    <text evidence="1">Monomer.</text>
</comment>
<comment type="similarity">
    <text evidence="1">Belongs to the IPP transferase family.</text>
</comment>
<accession>Q3IDT9</accession>
<evidence type="ECO:0000255" key="1">
    <source>
        <dbReference type="HAMAP-Rule" id="MF_00185"/>
    </source>
</evidence>
<proteinExistence type="inferred from homology"/>
<organism>
    <name type="scientific">Pseudoalteromonas translucida (strain TAC 125)</name>
    <dbReference type="NCBI Taxonomy" id="326442"/>
    <lineage>
        <taxon>Bacteria</taxon>
        <taxon>Pseudomonadati</taxon>
        <taxon>Pseudomonadota</taxon>
        <taxon>Gammaproteobacteria</taxon>
        <taxon>Alteromonadales</taxon>
        <taxon>Pseudoalteromonadaceae</taxon>
        <taxon>Pseudoalteromonas</taxon>
    </lineage>
</organism>
<protein>
    <recommendedName>
        <fullName evidence="1">tRNA dimethylallyltransferase</fullName>
        <ecNumber evidence="1">2.5.1.75</ecNumber>
    </recommendedName>
    <alternativeName>
        <fullName evidence="1">Dimethylallyl diphosphate:tRNA dimethylallyltransferase</fullName>
        <shortName evidence="1">DMAPP:tRNA dimethylallyltransferase</shortName>
        <shortName evidence="1">DMATase</shortName>
    </alternativeName>
    <alternativeName>
        <fullName evidence="1">Isopentenyl-diphosphate:tRNA isopentenyltransferase</fullName>
        <shortName evidence="1">IPP transferase</shortName>
        <shortName evidence="1">IPPT</shortName>
        <shortName evidence="1">IPTase</shortName>
    </alternativeName>
</protein>
<feature type="chain" id="PRO_1000020644" description="tRNA dimethylallyltransferase">
    <location>
        <begin position="1"/>
        <end position="306"/>
    </location>
</feature>
<feature type="region of interest" description="Interaction with substrate tRNA" evidence="1">
    <location>
        <begin position="37"/>
        <end position="40"/>
    </location>
</feature>
<feature type="region of interest" description="Interaction with substrate tRNA" evidence="1">
    <location>
        <begin position="161"/>
        <end position="165"/>
    </location>
</feature>
<feature type="region of interest" description="Interaction with substrate tRNA" evidence="1">
    <location>
        <begin position="242"/>
        <end position="247"/>
    </location>
</feature>
<feature type="binding site" evidence="1">
    <location>
        <begin position="12"/>
        <end position="19"/>
    </location>
    <ligand>
        <name>ATP</name>
        <dbReference type="ChEBI" id="CHEBI:30616"/>
    </ligand>
</feature>
<feature type="binding site" evidence="1">
    <location>
        <begin position="14"/>
        <end position="19"/>
    </location>
    <ligand>
        <name>substrate</name>
    </ligand>
</feature>
<feature type="site" description="Interaction with substrate tRNA" evidence="1">
    <location>
        <position position="103"/>
    </location>
</feature>
<feature type="site" description="Interaction with substrate tRNA" evidence="1">
    <location>
        <position position="125"/>
    </location>
</feature>
<reference key="1">
    <citation type="journal article" date="2005" name="Genome Res.">
        <title>Coping with cold: the genome of the versatile marine Antarctica bacterium Pseudoalteromonas haloplanktis TAC125.</title>
        <authorList>
            <person name="Medigue C."/>
            <person name="Krin E."/>
            <person name="Pascal G."/>
            <person name="Barbe V."/>
            <person name="Bernsel A."/>
            <person name="Bertin P.N."/>
            <person name="Cheung F."/>
            <person name="Cruveiller S."/>
            <person name="D'Amico S."/>
            <person name="Duilio A."/>
            <person name="Fang G."/>
            <person name="Feller G."/>
            <person name="Ho C."/>
            <person name="Mangenot S."/>
            <person name="Marino G."/>
            <person name="Nilsson J."/>
            <person name="Parrilli E."/>
            <person name="Rocha E.P.C."/>
            <person name="Rouy Z."/>
            <person name="Sekowska A."/>
            <person name="Tutino M.L."/>
            <person name="Vallenet D."/>
            <person name="von Heijne G."/>
            <person name="Danchin A."/>
        </authorList>
    </citation>
    <scope>NUCLEOTIDE SEQUENCE [LARGE SCALE GENOMIC DNA]</scope>
    <source>
        <strain>TAC 125</strain>
    </source>
</reference>
<dbReference type="EC" id="2.5.1.75" evidence="1"/>
<dbReference type="EMBL" id="CR954246">
    <property type="protein sequence ID" value="CAI85369.1"/>
    <property type="molecule type" value="Genomic_DNA"/>
</dbReference>
<dbReference type="SMR" id="Q3IDT9"/>
<dbReference type="STRING" id="326442.PSHAa0270"/>
<dbReference type="KEGG" id="pha:PSHAa0270"/>
<dbReference type="eggNOG" id="COG0324">
    <property type="taxonomic scope" value="Bacteria"/>
</dbReference>
<dbReference type="HOGENOM" id="CLU_032616_0_0_6"/>
<dbReference type="Proteomes" id="UP000006843">
    <property type="component" value="Chromosome I"/>
</dbReference>
<dbReference type="GO" id="GO:0005524">
    <property type="term" value="F:ATP binding"/>
    <property type="evidence" value="ECO:0007669"/>
    <property type="project" value="UniProtKB-UniRule"/>
</dbReference>
<dbReference type="GO" id="GO:0052381">
    <property type="term" value="F:tRNA dimethylallyltransferase activity"/>
    <property type="evidence" value="ECO:0007669"/>
    <property type="project" value="UniProtKB-UniRule"/>
</dbReference>
<dbReference type="GO" id="GO:0006400">
    <property type="term" value="P:tRNA modification"/>
    <property type="evidence" value="ECO:0007669"/>
    <property type="project" value="TreeGrafter"/>
</dbReference>
<dbReference type="FunFam" id="1.10.20.140:FF:000001">
    <property type="entry name" value="tRNA dimethylallyltransferase"/>
    <property type="match status" value="1"/>
</dbReference>
<dbReference type="Gene3D" id="1.10.20.140">
    <property type="match status" value="1"/>
</dbReference>
<dbReference type="Gene3D" id="3.40.50.300">
    <property type="entry name" value="P-loop containing nucleotide triphosphate hydrolases"/>
    <property type="match status" value="1"/>
</dbReference>
<dbReference type="HAMAP" id="MF_00185">
    <property type="entry name" value="IPP_trans"/>
    <property type="match status" value="1"/>
</dbReference>
<dbReference type="InterPro" id="IPR039657">
    <property type="entry name" value="Dimethylallyltransferase"/>
</dbReference>
<dbReference type="InterPro" id="IPR018022">
    <property type="entry name" value="IPT"/>
</dbReference>
<dbReference type="InterPro" id="IPR027417">
    <property type="entry name" value="P-loop_NTPase"/>
</dbReference>
<dbReference type="NCBIfam" id="TIGR00174">
    <property type="entry name" value="miaA"/>
    <property type="match status" value="1"/>
</dbReference>
<dbReference type="PANTHER" id="PTHR11088">
    <property type="entry name" value="TRNA DIMETHYLALLYLTRANSFERASE"/>
    <property type="match status" value="1"/>
</dbReference>
<dbReference type="PANTHER" id="PTHR11088:SF60">
    <property type="entry name" value="TRNA DIMETHYLALLYLTRANSFERASE"/>
    <property type="match status" value="1"/>
</dbReference>
<dbReference type="Pfam" id="PF01715">
    <property type="entry name" value="IPPT"/>
    <property type="match status" value="1"/>
</dbReference>
<dbReference type="SUPFAM" id="SSF52540">
    <property type="entry name" value="P-loop containing nucleoside triphosphate hydrolases"/>
    <property type="match status" value="1"/>
</dbReference>
<gene>
    <name evidence="1" type="primary">miaA</name>
    <name type="ordered locus">PSHAa0270</name>
</gene>
<keyword id="KW-0067">ATP-binding</keyword>
<keyword id="KW-0460">Magnesium</keyword>
<keyword id="KW-0547">Nucleotide-binding</keyword>
<keyword id="KW-1185">Reference proteome</keyword>
<keyword id="KW-0808">Transferase</keyword>
<keyword id="KW-0819">tRNA processing</keyword>